<gene>
    <name type="primary">CD40LG</name>
    <name type="synonym">CD40L</name>
    <name type="synonym">TNFSF5</name>
</gene>
<accession>P63304</accession>
<accession>Q9BDC7</accession>
<proteinExistence type="evidence at transcript level"/>
<keyword id="KW-1003">Cell membrane</keyword>
<keyword id="KW-0202">Cytokine</keyword>
<keyword id="KW-1015">Disulfide bond</keyword>
<keyword id="KW-0325">Glycoprotein</keyword>
<keyword id="KW-0472">Membrane</keyword>
<keyword id="KW-1185">Reference proteome</keyword>
<keyword id="KW-0964">Secreted</keyword>
<keyword id="KW-0735">Signal-anchor</keyword>
<keyword id="KW-0812">Transmembrane</keyword>
<keyword id="KW-1133">Transmembrane helix</keyword>
<feature type="chain" id="PRO_0000034486" description="CD40 ligand, membrane form">
    <location>
        <begin position="1"/>
        <end position="261"/>
    </location>
</feature>
<feature type="chain" id="PRO_0000034487" description="CD40 ligand, soluble form" evidence="3">
    <location>
        <begin position="113"/>
        <end position="261"/>
    </location>
</feature>
<feature type="topological domain" description="Cytoplasmic" evidence="4">
    <location>
        <begin position="1"/>
        <end position="22"/>
    </location>
</feature>
<feature type="transmembrane region" description="Helical; Signal-anchor for type II membrane protein" evidence="4">
    <location>
        <begin position="23"/>
        <end position="43"/>
    </location>
</feature>
<feature type="topological domain" description="Extracellular" evidence="4">
    <location>
        <begin position="44"/>
        <end position="261"/>
    </location>
</feature>
<feature type="domain" description="THD" evidence="5">
    <location>
        <begin position="122"/>
        <end position="261"/>
    </location>
</feature>
<feature type="site" description="Cleavage" evidence="1">
    <location>
        <begin position="112"/>
        <end position="113"/>
    </location>
</feature>
<feature type="glycosylation site" description="N-linked (GlcNAc...) asparagine" evidence="4">
    <location>
        <position position="240"/>
    </location>
</feature>
<feature type="disulfide bond" evidence="5">
    <location>
        <begin position="178"/>
        <end position="218"/>
    </location>
</feature>
<feature type="sequence variant" evidence="6">
    <original>H</original>
    <variation>Q</variation>
    <location>
        <position position="60"/>
    </location>
</feature>
<feature type="sequence variant" evidence="6">
    <original>I</original>
    <variation>V</variation>
    <location>
        <position position="204"/>
    </location>
</feature>
<feature type="sequence variant" evidence="6">
    <original>L</original>
    <variation>P</variation>
    <location>
        <position position="206"/>
    </location>
</feature>
<feature type="sequence variant" evidence="6">
    <original>A</original>
    <variation>T</variation>
    <location>
        <position position="215"/>
    </location>
</feature>
<sequence length="261" mass="29366">MIETYNQPSPRSAATGLPVRMKIFMYLLTIFLITQMIGSALFAVYLHRRLDKIEDERNLHEDFVFMKTIQRCNTGERSLSLLNCEEIKSQFEGFVKDIMLNKEEKKKENSFEMQKGDQNPQIAAHVISEASSKTTSVLQWAEKGYYTMSNNLVTLENGKQLTVKRQGLYYIYAQVTFCSNREASSQAPFIASLCLKSPGRFERILLRAANTHSSAKPCGQQSIHLGGVFELQPGASVFVNVTDPSQVSHGTGFTSFGLLKL</sequence>
<name>CD40L_MACMU</name>
<dbReference type="EMBL" id="AF344859">
    <property type="protein sequence ID" value="AAK37541.1"/>
    <property type="molecule type" value="mRNA"/>
</dbReference>
<dbReference type="RefSeq" id="NP_001028011.1">
    <property type="nucleotide sequence ID" value="NM_001032839.1"/>
</dbReference>
<dbReference type="SMR" id="P63304"/>
<dbReference type="FunCoup" id="P63304">
    <property type="interactions" value="585"/>
</dbReference>
<dbReference type="STRING" id="9544.ENSMMUP00000040794"/>
<dbReference type="GlyCosmos" id="P63304">
    <property type="glycosylation" value="1 site, No reported glycans"/>
</dbReference>
<dbReference type="PaxDb" id="9544-ENSMMUP00000018111"/>
<dbReference type="GeneID" id="574160"/>
<dbReference type="KEGG" id="mcc:574160"/>
<dbReference type="CTD" id="959"/>
<dbReference type="eggNOG" id="KOG3656">
    <property type="taxonomic scope" value="Eukaryota"/>
</dbReference>
<dbReference type="InParanoid" id="P63304"/>
<dbReference type="OrthoDB" id="8667946at2759"/>
<dbReference type="Proteomes" id="UP000006718">
    <property type="component" value="Unassembled WGS sequence"/>
</dbReference>
<dbReference type="GO" id="GO:0009986">
    <property type="term" value="C:cell surface"/>
    <property type="evidence" value="ECO:0000250"/>
    <property type="project" value="UniProtKB"/>
</dbReference>
<dbReference type="GO" id="GO:0005615">
    <property type="term" value="C:extracellular space"/>
    <property type="evidence" value="ECO:0000318"/>
    <property type="project" value="GO_Central"/>
</dbReference>
<dbReference type="GO" id="GO:0005886">
    <property type="term" value="C:plasma membrane"/>
    <property type="evidence" value="ECO:0007669"/>
    <property type="project" value="UniProtKB-SubCell"/>
</dbReference>
<dbReference type="GO" id="GO:0005174">
    <property type="term" value="F:CD40 receptor binding"/>
    <property type="evidence" value="ECO:0000250"/>
    <property type="project" value="UniProtKB"/>
</dbReference>
<dbReference type="GO" id="GO:0005125">
    <property type="term" value="F:cytokine activity"/>
    <property type="evidence" value="ECO:0000318"/>
    <property type="project" value="GO_Central"/>
</dbReference>
<dbReference type="GO" id="GO:0043539">
    <property type="term" value="F:protein serine/threonine kinase activator activity"/>
    <property type="evidence" value="ECO:0000250"/>
    <property type="project" value="UniProtKB"/>
</dbReference>
<dbReference type="GO" id="GO:0005164">
    <property type="term" value="F:tumor necrosis factor receptor binding"/>
    <property type="evidence" value="ECO:0007669"/>
    <property type="project" value="InterPro"/>
</dbReference>
<dbReference type="GO" id="GO:0042100">
    <property type="term" value="P:B cell proliferation"/>
    <property type="evidence" value="ECO:0000250"/>
    <property type="project" value="UniProtKB"/>
</dbReference>
<dbReference type="GO" id="GO:0007166">
    <property type="term" value="P:cell surface receptor signaling pathway"/>
    <property type="evidence" value="ECO:0000318"/>
    <property type="project" value="GO_Central"/>
</dbReference>
<dbReference type="GO" id="GO:0006955">
    <property type="term" value="P:immune response"/>
    <property type="evidence" value="ECO:0007669"/>
    <property type="project" value="InterPro"/>
</dbReference>
<dbReference type="GO" id="GO:0006954">
    <property type="term" value="P:inflammatory response"/>
    <property type="evidence" value="ECO:0000250"/>
    <property type="project" value="UniProtKB"/>
</dbReference>
<dbReference type="GO" id="GO:0030168">
    <property type="term" value="P:platelet activation"/>
    <property type="evidence" value="ECO:0000250"/>
    <property type="project" value="UniProtKB"/>
</dbReference>
<dbReference type="GO" id="GO:0043123">
    <property type="term" value="P:positive regulation of canonical NF-kappaB signal transduction"/>
    <property type="evidence" value="ECO:0000318"/>
    <property type="project" value="GO_Central"/>
</dbReference>
<dbReference type="GO" id="GO:2001238">
    <property type="term" value="P:positive regulation of extrinsic apoptotic signaling pathway"/>
    <property type="evidence" value="ECO:0000318"/>
    <property type="project" value="GO_Central"/>
</dbReference>
<dbReference type="GO" id="GO:0032733">
    <property type="term" value="P:positive regulation of interleukin-10 production"/>
    <property type="evidence" value="ECO:0000250"/>
    <property type="project" value="UniProtKB"/>
</dbReference>
<dbReference type="GO" id="GO:0032753">
    <property type="term" value="P:positive regulation of interleukin-4 production"/>
    <property type="evidence" value="ECO:0000250"/>
    <property type="project" value="UniProtKB"/>
</dbReference>
<dbReference type="GO" id="GO:0051092">
    <property type="term" value="P:positive regulation of NF-kappaB transcription factor activity"/>
    <property type="evidence" value="ECO:0000250"/>
    <property type="project" value="UniProtKB"/>
</dbReference>
<dbReference type="GO" id="GO:0042102">
    <property type="term" value="P:positive regulation of T cell proliferation"/>
    <property type="evidence" value="ECO:0000250"/>
    <property type="project" value="UniProtKB"/>
</dbReference>
<dbReference type="CDD" id="cd00184">
    <property type="entry name" value="TNF"/>
    <property type="match status" value="1"/>
</dbReference>
<dbReference type="FunFam" id="2.60.120.40:FF:000013">
    <property type="entry name" value="CD40 ligand"/>
    <property type="match status" value="1"/>
</dbReference>
<dbReference type="Gene3D" id="2.60.120.40">
    <property type="match status" value="1"/>
</dbReference>
<dbReference type="InterPro" id="IPR003263">
    <property type="entry name" value="CD40L"/>
</dbReference>
<dbReference type="InterPro" id="IPR021184">
    <property type="entry name" value="TNF_CS"/>
</dbReference>
<dbReference type="InterPro" id="IPR006052">
    <property type="entry name" value="TNF_dom"/>
</dbReference>
<dbReference type="InterPro" id="IPR008983">
    <property type="entry name" value="Tumour_necrosis_fac-like_dom"/>
</dbReference>
<dbReference type="PANTHER" id="PTHR11471:SF5">
    <property type="entry name" value="CD40 LIGAND"/>
    <property type="match status" value="1"/>
</dbReference>
<dbReference type="PANTHER" id="PTHR11471">
    <property type="entry name" value="TUMOR NECROSIS FACTOR FAMILY MEMBER"/>
    <property type="match status" value="1"/>
</dbReference>
<dbReference type="Pfam" id="PF00229">
    <property type="entry name" value="TNF"/>
    <property type="match status" value="1"/>
</dbReference>
<dbReference type="PIRSF" id="PIRSF016527">
    <property type="entry name" value="TNF_5"/>
    <property type="match status" value="1"/>
</dbReference>
<dbReference type="PRINTS" id="PR01702">
    <property type="entry name" value="CD40LIGAND"/>
</dbReference>
<dbReference type="SMART" id="SM00207">
    <property type="entry name" value="TNF"/>
    <property type="match status" value="1"/>
</dbReference>
<dbReference type="SUPFAM" id="SSF49842">
    <property type="entry name" value="TNF-like"/>
    <property type="match status" value="1"/>
</dbReference>
<dbReference type="PROSITE" id="PS00251">
    <property type="entry name" value="THD_1"/>
    <property type="match status" value="1"/>
</dbReference>
<dbReference type="PROSITE" id="PS50049">
    <property type="entry name" value="THD_2"/>
    <property type="match status" value="1"/>
</dbReference>
<evidence type="ECO:0000250" key="1"/>
<evidence type="ECO:0000250" key="2">
    <source>
        <dbReference type="UniProtKB" id="P27548"/>
    </source>
</evidence>
<evidence type="ECO:0000250" key="3">
    <source>
        <dbReference type="UniProtKB" id="P29965"/>
    </source>
</evidence>
<evidence type="ECO:0000255" key="4"/>
<evidence type="ECO:0000255" key="5">
    <source>
        <dbReference type="PROSITE-ProRule" id="PRU01387"/>
    </source>
</evidence>
<evidence type="ECO:0000269" key="6">
    <source>
    </source>
</evidence>
<evidence type="ECO:0000305" key="7"/>
<reference key="1">
    <citation type="journal article" date="2001" name="Immunogenetics">
        <title>Cloning, sequencing, and homology analysis of nonhuman primate Fas/Fas-ligand and co-stimulatory molecules.</title>
        <authorList>
            <person name="Villinger F.J."/>
            <person name="Bostik P."/>
            <person name="Mayne A.E."/>
            <person name="King C.L."/>
            <person name="Genain C.P."/>
            <person name="Weiss W.R."/>
            <person name="Ansari A.A."/>
        </authorList>
    </citation>
    <scope>NUCLEOTIDE SEQUENCE [MRNA]</scope>
    <scope>VARIANTS GLN-60; VAL-204; PRO-206 AND THR-215</scope>
    <source>
        <tissue>Lymphocyte</tissue>
    </source>
</reference>
<organism>
    <name type="scientific">Macaca mulatta</name>
    <name type="common">Rhesus macaque</name>
    <dbReference type="NCBI Taxonomy" id="9544"/>
    <lineage>
        <taxon>Eukaryota</taxon>
        <taxon>Metazoa</taxon>
        <taxon>Chordata</taxon>
        <taxon>Craniata</taxon>
        <taxon>Vertebrata</taxon>
        <taxon>Euteleostomi</taxon>
        <taxon>Mammalia</taxon>
        <taxon>Eutheria</taxon>
        <taxon>Euarchontoglires</taxon>
        <taxon>Primates</taxon>
        <taxon>Haplorrhini</taxon>
        <taxon>Catarrhini</taxon>
        <taxon>Cercopithecidae</taxon>
        <taxon>Cercopithecinae</taxon>
        <taxon>Macaca</taxon>
    </lineage>
</organism>
<comment type="function">
    <text evidence="2 3">Cytokine that acts as a ligand to CD40/TNFRSF5 (By similarity). Costimulates T-cell proliferation and cytokine production (By similarity). Its cross-linking on T-cells generates a costimulatory signal which enhances the production of IL4 and IL10 in conjunction with the TCR/CD3 ligation and CD28 costimulation (By similarity). Induces the activation of NF-kappa-B (By similarity). Induces the activation of kinases MAPK8 and PAK2 in T-cells (By similarity). Mediates B-cell proliferation in the absence of co-stimulus as well as IgE production in the presence of IL4 (By similarity). Involved in immunoglobulin class switching (By similarity).</text>
</comment>
<comment type="function">
    <molecule>CD40 ligand, soluble form</molecule>
    <text evidence="3">Acts as a ligand for integrins, specifically ITGA5:ITGB1 and ITGAV:ITGB3; both integrins and the CD40 receptor are required for activation of CD40-CD40LG signaling, which have cell-type dependent effects, such as B-cell activation, NF-kappa-B signaling and anti-apoptotic signaling.</text>
</comment>
<comment type="subunit">
    <text evidence="3">Homotrimer (By similarity). Interacts with CD28 (By similarity). CD40 ligand, soluble form: Exists as either a monomer or a homotrimer (By similarity). Forms a ternary complex between CD40 and integrins for CD40-CD40LG signaling (By similarity).</text>
</comment>
<comment type="subcellular location">
    <subcellularLocation>
        <location evidence="3">Cell membrane</location>
        <topology evidence="3">Single-pass type II membrane protein</topology>
    </subcellularLocation>
    <subcellularLocation>
        <location evidence="3">Cell surface</location>
    </subcellularLocation>
</comment>
<comment type="subcellular location">
    <molecule>CD40 ligand, soluble form</molecule>
    <subcellularLocation>
        <location evidence="3">Secreted</location>
    </subcellularLocation>
    <text evidence="3">Release of soluble CD40L from platelets is partially regulated by GP IIb/IIIa, actin polymerization, and a matrix metalloproteinases (MMP) inhibitor-sensitive pathway.</text>
</comment>
<comment type="PTM">
    <text evidence="3">The soluble form derives from the membrane form by proteolytic processing.</text>
</comment>
<comment type="similarity">
    <text evidence="7">Belongs to the tumor necrosis factor family.</text>
</comment>
<protein>
    <recommendedName>
        <fullName>CD40 ligand</fullName>
        <shortName>CD40-L</shortName>
    </recommendedName>
    <alternativeName>
        <fullName>Tumor necrosis factor ligand superfamily member 5</fullName>
    </alternativeName>
    <cdAntigenName>CD154</cdAntigenName>
    <component>
        <recommendedName>
            <fullName>CD40 ligand, membrane form</fullName>
        </recommendedName>
    </component>
    <component>
        <recommendedName>
            <fullName evidence="3">CD40 ligand, soluble form</fullName>
            <shortName evidence="3">sCD40L</shortName>
        </recommendedName>
    </component>
</protein>